<protein>
    <recommendedName>
        <fullName evidence="1">Small ribosomal subunit protein bS16</fullName>
    </recommendedName>
    <alternativeName>
        <fullName evidence="2">30S ribosomal protein S16</fullName>
    </alternativeName>
</protein>
<feature type="chain" id="PRO_1000049236" description="Small ribosomal subunit protein bS16">
    <location>
        <begin position="1"/>
        <end position="75"/>
    </location>
</feature>
<organism>
    <name type="scientific">Campylobacter jejuni subsp. jejuni serotype O:23/36 (strain 81-176)</name>
    <dbReference type="NCBI Taxonomy" id="354242"/>
    <lineage>
        <taxon>Bacteria</taxon>
        <taxon>Pseudomonadati</taxon>
        <taxon>Campylobacterota</taxon>
        <taxon>Epsilonproteobacteria</taxon>
        <taxon>Campylobacterales</taxon>
        <taxon>Campylobacteraceae</taxon>
        <taxon>Campylobacter</taxon>
    </lineage>
</organism>
<sequence>MTVIRLTRMGRTKRPFYRIVVTDSRKRRDGGWIESIGYYNPMVEPEVIKVDAERLAYWKSVGAKLSDKVASITSK</sequence>
<comment type="similarity">
    <text evidence="1">Belongs to the bacterial ribosomal protein bS16 family.</text>
</comment>
<evidence type="ECO:0000255" key="1">
    <source>
        <dbReference type="HAMAP-Rule" id="MF_00385"/>
    </source>
</evidence>
<evidence type="ECO:0000305" key="2"/>
<gene>
    <name evidence="1" type="primary">rpsP</name>
    <name type="ordered locus">CJJ81176_0733</name>
</gene>
<proteinExistence type="inferred from homology"/>
<accession>A1VZ65</accession>
<dbReference type="EMBL" id="CP000538">
    <property type="protein sequence ID" value="EAQ72365.1"/>
    <property type="molecule type" value="Genomic_DNA"/>
</dbReference>
<dbReference type="RefSeq" id="WP_002852274.1">
    <property type="nucleotide sequence ID" value="NC_008787.1"/>
</dbReference>
<dbReference type="SMR" id="A1VZ65"/>
<dbReference type="KEGG" id="cjj:CJJ81176_0733"/>
<dbReference type="eggNOG" id="COG0228">
    <property type="taxonomic scope" value="Bacteria"/>
</dbReference>
<dbReference type="HOGENOM" id="CLU_100590_5_1_7"/>
<dbReference type="Proteomes" id="UP000000646">
    <property type="component" value="Chromosome"/>
</dbReference>
<dbReference type="GO" id="GO:0005737">
    <property type="term" value="C:cytoplasm"/>
    <property type="evidence" value="ECO:0007669"/>
    <property type="project" value="UniProtKB-ARBA"/>
</dbReference>
<dbReference type="GO" id="GO:0015935">
    <property type="term" value="C:small ribosomal subunit"/>
    <property type="evidence" value="ECO:0007669"/>
    <property type="project" value="TreeGrafter"/>
</dbReference>
<dbReference type="GO" id="GO:0003735">
    <property type="term" value="F:structural constituent of ribosome"/>
    <property type="evidence" value="ECO:0007669"/>
    <property type="project" value="InterPro"/>
</dbReference>
<dbReference type="GO" id="GO:0006412">
    <property type="term" value="P:translation"/>
    <property type="evidence" value="ECO:0007669"/>
    <property type="project" value="UniProtKB-UniRule"/>
</dbReference>
<dbReference type="FunFam" id="3.30.1320.10:FF:000005">
    <property type="entry name" value="30S ribosomal protein S16"/>
    <property type="match status" value="1"/>
</dbReference>
<dbReference type="Gene3D" id="3.30.1320.10">
    <property type="match status" value="1"/>
</dbReference>
<dbReference type="HAMAP" id="MF_00385">
    <property type="entry name" value="Ribosomal_bS16"/>
    <property type="match status" value="1"/>
</dbReference>
<dbReference type="InterPro" id="IPR000307">
    <property type="entry name" value="Ribosomal_bS16"/>
</dbReference>
<dbReference type="InterPro" id="IPR020592">
    <property type="entry name" value="Ribosomal_bS16_CS"/>
</dbReference>
<dbReference type="InterPro" id="IPR023803">
    <property type="entry name" value="Ribosomal_bS16_dom_sf"/>
</dbReference>
<dbReference type="NCBIfam" id="TIGR00002">
    <property type="entry name" value="S16"/>
    <property type="match status" value="1"/>
</dbReference>
<dbReference type="PANTHER" id="PTHR12919">
    <property type="entry name" value="30S RIBOSOMAL PROTEIN S16"/>
    <property type="match status" value="1"/>
</dbReference>
<dbReference type="PANTHER" id="PTHR12919:SF20">
    <property type="entry name" value="SMALL RIBOSOMAL SUBUNIT PROTEIN BS16M"/>
    <property type="match status" value="1"/>
</dbReference>
<dbReference type="Pfam" id="PF00886">
    <property type="entry name" value="Ribosomal_S16"/>
    <property type="match status" value="1"/>
</dbReference>
<dbReference type="SUPFAM" id="SSF54565">
    <property type="entry name" value="Ribosomal protein S16"/>
    <property type="match status" value="1"/>
</dbReference>
<dbReference type="PROSITE" id="PS00732">
    <property type="entry name" value="RIBOSOMAL_S16"/>
    <property type="match status" value="1"/>
</dbReference>
<name>RS16_CAMJJ</name>
<reference key="1">
    <citation type="submission" date="2006-12" db="EMBL/GenBank/DDBJ databases">
        <authorList>
            <person name="Fouts D.E."/>
            <person name="Nelson K.E."/>
            <person name="Sebastian Y."/>
        </authorList>
    </citation>
    <scope>NUCLEOTIDE SEQUENCE [LARGE SCALE GENOMIC DNA]</scope>
    <source>
        <strain>81-176</strain>
    </source>
</reference>
<keyword id="KW-0687">Ribonucleoprotein</keyword>
<keyword id="KW-0689">Ribosomal protein</keyword>